<evidence type="ECO:0000255" key="1">
    <source>
        <dbReference type="HAMAP-Rule" id="MF_00401"/>
    </source>
</evidence>
<accession>Q9UZV4</accession>
<accession>G8ZJJ2</accession>
<gene>
    <name type="ordered locus">PYRAB10420</name>
    <name type="ORF">PAB1673</name>
</gene>
<keyword id="KW-0049">Antioxidant</keyword>
<keyword id="KW-0963">Cytoplasm</keyword>
<keyword id="KW-1015">Disulfide bond</keyword>
<keyword id="KW-0560">Oxidoreductase</keyword>
<keyword id="KW-0575">Peroxidase</keyword>
<keyword id="KW-0676">Redox-active center</keyword>
<name>TDXH_PYRAB</name>
<proteinExistence type="inferred from homology"/>
<reference key="1">
    <citation type="journal article" date="2003" name="Mol. Microbiol.">
        <title>An integrated analysis of the genome of the hyperthermophilic archaeon Pyrococcus abyssi.</title>
        <authorList>
            <person name="Cohen G.N."/>
            <person name="Barbe V."/>
            <person name="Flament D."/>
            <person name="Galperin M."/>
            <person name="Heilig R."/>
            <person name="Lecompte O."/>
            <person name="Poch O."/>
            <person name="Prieur D."/>
            <person name="Querellou J."/>
            <person name="Ripp R."/>
            <person name="Thierry J.-C."/>
            <person name="Van der Oost J."/>
            <person name="Weissenbach J."/>
            <person name="Zivanovic Y."/>
            <person name="Forterre P."/>
        </authorList>
    </citation>
    <scope>NUCLEOTIDE SEQUENCE [LARGE SCALE GENOMIC DNA]</scope>
    <source>
        <strain>GE5 / Orsay</strain>
    </source>
</reference>
<reference key="2">
    <citation type="journal article" date="2012" name="Curr. Microbiol.">
        <title>Re-annotation of two hyperthermophilic archaea Pyrococcus abyssi GE5 and Pyrococcus furiosus DSM 3638.</title>
        <authorList>
            <person name="Gao J."/>
            <person name="Wang J."/>
        </authorList>
    </citation>
    <scope>GENOME REANNOTATION</scope>
    <source>
        <strain>GE5 / Orsay</strain>
    </source>
</reference>
<feature type="chain" id="PRO_0000135163" description="Peroxiredoxin">
    <location>
        <begin position="1"/>
        <end position="216"/>
    </location>
</feature>
<feature type="domain" description="Thioredoxin" evidence="1">
    <location>
        <begin position="2"/>
        <end position="158"/>
    </location>
</feature>
<feature type="active site" description="Cysteine sulfenic acid (-SOH) intermediate" evidence="1">
    <location>
        <position position="46"/>
    </location>
</feature>
<feature type="binding site" evidence="1">
    <location>
        <position position="121"/>
    </location>
    <ligand>
        <name>substrate</name>
    </ligand>
</feature>
<feature type="disulfide bond" description="Interchain (with C-211); in linked form" evidence="1">
    <location>
        <position position="46"/>
    </location>
</feature>
<feature type="disulfide bond" description="Alternate" evidence="1">
    <location>
        <begin position="205"/>
        <end position="211"/>
    </location>
</feature>
<feature type="disulfide bond" description="Interchain (with C-46); in linked form" evidence="1">
    <location>
        <position position="211"/>
    </location>
</feature>
<organism>
    <name type="scientific">Pyrococcus abyssi (strain GE5 / Orsay)</name>
    <dbReference type="NCBI Taxonomy" id="272844"/>
    <lineage>
        <taxon>Archaea</taxon>
        <taxon>Methanobacteriati</taxon>
        <taxon>Methanobacteriota</taxon>
        <taxon>Thermococci</taxon>
        <taxon>Thermococcales</taxon>
        <taxon>Thermococcaceae</taxon>
        <taxon>Pyrococcus</taxon>
    </lineage>
</organism>
<protein>
    <recommendedName>
        <fullName evidence="1">Peroxiredoxin</fullName>
        <ecNumber evidence="1">1.11.1.24</ecNumber>
    </recommendedName>
    <alternativeName>
        <fullName evidence="1">Thioredoxin peroxidase</fullName>
    </alternativeName>
    <alternativeName>
        <fullName evidence="1">Thioredoxin-dependent peroxiredoxin</fullName>
    </alternativeName>
</protein>
<dbReference type="EC" id="1.11.1.24" evidence="1"/>
<dbReference type="EMBL" id="AJ248286">
    <property type="protein sequence ID" value="CAB49952.1"/>
    <property type="molecule type" value="Genomic_DNA"/>
</dbReference>
<dbReference type="EMBL" id="HE613800">
    <property type="protein sequence ID" value="CCE70451.1"/>
    <property type="molecule type" value="Genomic_DNA"/>
</dbReference>
<dbReference type="PIR" id="C75081">
    <property type="entry name" value="C75081"/>
</dbReference>
<dbReference type="RefSeq" id="WP_010868159.1">
    <property type="nucleotide sequence ID" value="NC_000868.1"/>
</dbReference>
<dbReference type="SMR" id="Q9UZV4"/>
<dbReference type="STRING" id="272844.PAB1673"/>
<dbReference type="KEGG" id="pab:PAB1673"/>
<dbReference type="PATRIC" id="fig|272844.11.peg.1094"/>
<dbReference type="eggNOG" id="arCOG00312">
    <property type="taxonomic scope" value="Archaea"/>
</dbReference>
<dbReference type="HOGENOM" id="CLU_042529_4_4_2"/>
<dbReference type="OrthoDB" id="6924at2157"/>
<dbReference type="PhylomeDB" id="Q9UZV4"/>
<dbReference type="Proteomes" id="UP000000810">
    <property type="component" value="Chromosome"/>
</dbReference>
<dbReference type="Proteomes" id="UP000009139">
    <property type="component" value="Chromosome"/>
</dbReference>
<dbReference type="GO" id="GO:0005829">
    <property type="term" value="C:cytosol"/>
    <property type="evidence" value="ECO:0007669"/>
    <property type="project" value="TreeGrafter"/>
</dbReference>
<dbReference type="GO" id="GO:0008379">
    <property type="term" value="F:thioredoxin peroxidase activity"/>
    <property type="evidence" value="ECO:0007669"/>
    <property type="project" value="TreeGrafter"/>
</dbReference>
<dbReference type="GO" id="GO:0045454">
    <property type="term" value="P:cell redox homeostasis"/>
    <property type="evidence" value="ECO:0007669"/>
    <property type="project" value="TreeGrafter"/>
</dbReference>
<dbReference type="GO" id="GO:0033554">
    <property type="term" value="P:cellular response to stress"/>
    <property type="evidence" value="ECO:0007669"/>
    <property type="project" value="TreeGrafter"/>
</dbReference>
<dbReference type="GO" id="GO:0042744">
    <property type="term" value="P:hydrogen peroxide catabolic process"/>
    <property type="evidence" value="ECO:0007669"/>
    <property type="project" value="TreeGrafter"/>
</dbReference>
<dbReference type="GO" id="GO:0006979">
    <property type="term" value="P:response to oxidative stress"/>
    <property type="evidence" value="ECO:0007669"/>
    <property type="project" value="TreeGrafter"/>
</dbReference>
<dbReference type="CDD" id="cd03016">
    <property type="entry name" value="PRX_1cys"/>
    <property type="match status" value="1"/>
</dbReference>
<dbReference type="FunFam" id="3.30.1020.10:FF:000002">
    <property type="entry name" value="Peroxiredoxin"/>
    <property type="match status" value="1"/>
</dbReference>
<dbReference type="FunFam" id="3.40.30.10:FF:000011">
    <property type="entry name" value="Peroxiredoxin PRX1"/>
    <property type="match status" value="1"/>
</dbReference>
<dbReference type="Gene3D" id="3.30.1020.10">
    <property type="entry name" value="Antioxidant, Horf6, Chain A, domain2"/>
    <property type="match status" value="1"/>
</dbReference>
<dbReference type="Gene3D" id="3.40.30.10">
    <property type="entry name" value="Glutaredoxin"/>
    <property type="match status" value="1"/>
</dbReference>
<dbReference type="HAMAP" id="MF_00401">
    <property type="entry name" value="Peroxiredoxin"/>
    <property type="match status" value="1"/>
</dbReference>
<dbReference type="InterPro" id="IPR000866">
    <property type="entry name" value="AhpC/TSA"/>
</dbReference>
<dbReference type="InterPro" id="IPR050217">
    <property type="entry name" value="Peroxiredoxin"/>
</dbReference>
<dbReference type="InterPro" id="IPR024706">
    <property type="entry name" value="Peroxiredoxin_AhpC-typ"/>
</dbReference>
<dbReference type="InterPro" id="IPR019479">
    <property type="entry name" value="Peroxiredoxin_C"/>
</dbReference>
<dbReference type="InterPro" id="IPR022915">
    <property type="entry name" value="Peroxiredoxin_TDXH"/>
</dbReference>
<dbReference type="InterPro" id="IPR045020">
    <property type="entry name" value="PRX_1cys"/>
</dbReference>
<dbReference type="InterPro" id="IPR036249">
    <property type="entry name" value="Thioredoxin-like_sf"/>
</dbReference>
<dbReference type="InterPro" id="IPR013766">
    <property type="entry name" value="Thioredoxin_domain"/>
</dbReference>
<dbReference type="NCBIfam" id="NF009668">
    <property type="entry name" value="PRK13189.1"/>
    <property type="match status" value="1"/>
</dbReference>
<dbReference type="PANTHER" id="PTHR10681:SF121">
    <property type="entry name" value="ALKYL HYDROPEROXIDE REDUCTASE C"/>
    <property type="match status" value="1"/>
</dbReference>
<dbReference type="PANTHER" id="PTHR10681">
    <property type="entry name" value="THIOREDOXIN PEROXIDASE"/>
    <property type="match status" value="1"/>
</dbReference>
<dbReference type="Pfam" id="PF10417">
    <property type="entry name" value="1-cysPrx_C"/>
    <property type="match status" value="1"/>
</dbReference>
<dbReference type="Pfam" id="PF00578">
    <property type="entry name" value="AhpC-TSA"/>
    <property type="match status" value="1"/>
</dbReference>
<dbReference type="PIRSF" id="PIRSF000239">
    <property type="entry name" value="AHPC"/>
    <property type="match status" value="1"/>
</dbReference>
<dbReference type="SUPFAM" id="SSF52833">
    <property type="entry name" value="Thioredoxin-like"/>
    <property type="match status" value="1"/>
</dbReference>
<dbReference type="PROSITE" id="PS51352">
    <property type="entry name" value="THIOREDOXIN_2"/>
    <property type="match status" value="1"/>
</dbReference>
<sequence length="216" mass="24758">MVVIGEKFPEVEVKTTHGVIKLPDHFTKQGKWFILFSHPADFTPVCTTEFYGMQKRLEEFRKLGVEPIGLSVDQVFAHIKWMEWIKENLGVEIEFPIIADDRGELAEKLGMIPSGATITARAVFIVDDKGIIRAIVYYPAEVGRDWDEILRLVKALKISTENGVALPHKWPNNELIGDKVIIPPASTVEEKKQREEAKAKGEIECYDWWFCYKKLK</sequence>
<comment type="function">
    <text evidence="1">Thiol-specific peroxidase that catalyzes the reduction of hydrogen peroxide and organic hydroperoxides to water and alcohols, respectively. Plays a role in cell protection against oxidative stress by detoxifying peroxides.</text>
</comment>
<comment type="catalytic activity">
    <reaction evidence="1">
        <text>a hydroperoxide + [thioredoxin]-dithiol = an alcohol + [thioredoxin]-disulfide + H2O</text>
        <dbReference type="Rhea" id="RHEA:62620"/>
        <dbReference type="Rhea" id="RHEA-COMP:10698"/>
        <dbReference type="Rhea" id="RHEA-COMP:10700"/>
        <dbReference type="ChEBI" id="CHEBI:15377"/>
        <dbReference type="ChEBI" id="CHEBI:29950"/>
        <dbReference type="ChEBI" id="CHEBI:30879"/>
        <dbReference type="ChEBI" id="CHEBI:35924"/>
        <dbReference type="ChEBI" id="CHEBI:50058"/>
        <dbReference type="EC" id="1.11.1.24"/>
    </reaction>
</comment>
<comment type="subunit">
    <text evidence="1">Homodecamer. Pentamer of dimers that assemble into a ring structure.</text>
</comment>
<comment type="subcellular location">
    <subcellularLocation>
        <location evidence="1">Cytoplasm</location>
    </subcellularLocation>
</comment>
<comment type="miscellaneous">
    <text evidence="1">The active site is a conserved redox-active cysteine residue, the peroxidatic cysteine (C(P)), which makes the nucleophilic attack on the peroxide substrate. The peroxide oxidizes the C(P)-SH to cysteine sulfenic acid (C(P)-SOH), which then reacts with another cysteine residue, the resolving cysteine (C(R)), to form a disulfide bridge. The disulfide is subsequently reduced by an appropriate electron donor to complete the catalytic cycle. Although the primary sequence of this enzyme is similar to those of the 1-Cys Prx6 enzymes, its catalytic properties resemble those of the typical 2-Cys Prxs and C(R) is provided by the other dimeric subunit to form an intersubunit disulfide. The disulfide is subsequently reduced by thioredoxin.</text>
</comment>
<comment type="similarity">
    <text evidence="1">Belongs to the peroxiredoxin family. Prx6 subfamily.</text>
</comment>